<keyword id="KW-0067">ATP-binding</keyword>
<keyword id="KW-0963">Cytoplasm</keyword>
<keyword id="KW-0436">Ligase</keyword>
<keyword id="KW-0547">Nucleotide-binding</keyword>
<keyword id="KW-0658">Purine biosynthesis</keyword>
<evidence type="ECO:0000255" key="1">
    <source>
        <dbReference type="HAMAP-Rule" id="MF_00741"/>
    </source>
</evidence>
<gene>
    <name evidence="1" type="primary">purM</name>
    <name type="ordered locus">SP70585_0114</name>
</gene>
<protein>
    <recommendedName>
        <fullName evidence="1">Phosphoribosylformylglycinamidine cyclo-ligase</fullName>
        <ecNumber evidence="1">6.3.3.1</ecNumber>
    </recommendedName>
    <alternativeName>
        <fullName evidence="1">AIR synthase</fullName>
    </alternativeName>
    <alternativeName>
        <fullName evidence="1">AIRS</fullName>
    </alternativeName>
    <alternativeName>
        <fullName evidence="1">Phosphoribosyl-aminoimidazole synthetase</fullName>
    </alternativeName>
</protein>
<organism>
    <name type="scientific">Streptococcus pneumoniae (strain 70585)</name>
    <dbReference type="NCBI Taxonomy" id="488221"/>
    <lineage>
        <taxon>Bacteria</taxon>
        <taxon>Bacillati</taxon>
        <taxon>Bacillota</taxon>
        <taxon>Bacilli</taxon>
        <taxon>Lactobacillales</taxon>
        <taxon>Streptococcaceae</taxon>
        <taxon>Streptococcus</taxon>
    </lineage>
</organism>
<sequence length="340" mass="36502">MTNKNAYAQSGVDVEAGYEVVERIKKHVARTERAGVMGALGGFGGMFDLSKTGVKEPVLISGTDGVGTKLMLAIKYDKHDTIGQDCVAMCVNDIIAAGAEPLYFLDYVATGKNEPAKLEQVVAGVAEGCVQAGAALIGGETAEMPGMYGEDDYDLAGFAVGVAEKSQIIDGSKVVEGDVLLGLASSGIHSNGYSLVRRVFADYTGEEVLPELEGKKLKEVLLEPTRIYVKAVLPLIKEELVNGIAHITGGGFIENVPRMFADDLAAEIDESKVPVLPIFKALEKYGQIKHEEMFEIFNMGVGLMLAVSPENVERVKELLDEAVYEIGRIVKKENESVIIK</sequence>
<dbReference type="EC" id="6.3.3.1" evidence="1"/>
<dbReference type="EMBL" id="CP000918">
    <property type="protein sequence ID" value="ACO17144.1"/>
    <property type="molecule type" value="Genomic_DNA"/>
</dbReference>
<dbReference type="RefSeq" id="WP_000182575.1">
    <property type="nucleotide sequence ID" value="NC_012468.1"/>
</dbReference>
<dbReference type="SMR" id="C1C9V1"/>
<dbReference type="KEGG" id="snm:SP70585_0114"/>
<dbReference type="HOGENOM" id="CLU_047116_0_0_9"/>
<dbReference type="UniPathway" id="UPA00074">
    <property type="reaction ID" value="UER00129"/>
</dbReference>
<dbReference type="Proteomes" id="UP000002211">
    <property type="component" value="Chromosome"/>
</dbReference>
<dbReference type="GO" id="GO:0005829">
    <property type="term" value="C:cytosol"/>
    <property type="evidence" value="ECO:0007669"/>
    <property type="project" value="TreeGrafter"/>
</dbReference>
<dbReference type="GO" id="GO:0005524">
    <property type="term" value="F:ATP binding"/>
    <property type="evidence" value="ECO:0007669"/>
    <property type="project" value="UniProtKB-KW"/>
</dbReference>
<dbReference type="GO" id="GO:0004637">
    <property type="term" value="F:phosphoribosylamine-glycine ligase activity"/>
    <property type="evidence" value="ECO:0007669"/>
    <property type="project" value="TreeGrafter"/>
</dbReference>
<dbReference type="GO" id="GO:0004641">
    <property type="term" value="F:phosphoribosylformylglycinamidine cyclo-ligase activity"/>
    <property type="evidence" value="ECO:0007669"/>
    <property type="project" value="UniProtKB-UniRule"/>
</dbReference>
<dbReference type="GO" id="GO:0006189">
    <property type="term" value="P:'de novo' IMP biosynthetic process"/>
    <property type="evidence" value="ECO:0007669"/>
    <property type="project" value="UniProtKB-UniRule"/>
</dbReference>
<dbReference type="GO" id="GO:0046084">
    <property type="term" value="P:adenine biosynthetic process"/>
    <property type="evidence" value="ECO:0007669"/>
    <property type="project" value="TreeGrafter"/>
</dbReference>
<dbReference type="CDD" id="cd02196">
    <property type="entry name" value="PurM"/>
    <property type="match status" value="1"/>
</dbReference>
<dbReference type="FunFam" id="3.30.1330.10:FF:000001">
    <property type="entry name" value="Phosphoribosylformylglycinamidine cyclo-ligase"/>
    <property type="match status" value="1"/>
</dbReference>
<dbReference type="FunFam" id="3.90.650.10:FF:000011">
    <property type="entry name" value="Phosphoribosylformylglycinamidine cyclo-ligase"/>
    <property type="match status" value="1"/>
</dbReference>
<dbReference type="Gene3D" id="3.90.650.10">
    <property type="entry name" value="PurM-like C-terminal domain"/>
    <property type="match status" value="1"/>
</dbReference>
<dbReference type="Gene3D" id="3.30.1330.10">
    <property type="entry name" value="PurM-like, N-terminal domain"/>
    <property type="match status" value="1"/>
</dbReference>
<dbReference type="HAMAP" id="MF_00741">
    <property type="entry name" value="AIRS"/>
    <property type="match status" value="1"/>
</dbReference>
<dbReference type="InterPro" id="IPR010918">
    <property type="entry name" value="PurM-like_C_dom"/>
</dbReference>
<dbReference type="InterPro" id="IPR036676">
    <property type="entry name" value="PurM-like_C_sf"/>
</dbReference>
<dbReference type="InterPro" id="IPR016188">
    <property type="entry name" value="PurM-like_N"/>
</dbReference>
<dbReference type="InterPro" id="IPR036921">
    <property type="entry name" value="PurM-like_N_sf"/>
</dbReference>
<dbReference type="InterPro" id="IPR004733">
    <property type="entry name" value="PurM_cligase"/>
</dbReference>
<dbReference type="NCBIfam" id="TIGR00878">
    <property type="entry name" value="purM"/>
    <property type="match status" value="1"/>
</dbReference>
<dbReference type="PANTHER" id="PTHR10520:SF12">
    <property type="entry name" value="TRIFUNCTIONAL PURINE BIOSYNTHETIC PROTEIN ADENOSINE-3"/>
    <property type="match status" value="1"/>
</dbReference>
<dbReference type="PANTHER" id="PTHR10520">
    <property type="entry name" value="TRIFUNCTIONAL PURINE BIOSYNTHETIC PROTEIN ADENOSINE-3-RELATED"/>
    <property type="match status" value="1"/>
</dbReference>
<dbReference type="Pfam" id="PF00586">
    <property type="entry name" value="AIRS"/>
    <property type="match status" value="1"/>
</dbReference>
<dbReference type="Pfam" id="PF02769">
    <property type="entry name" value="AIRS_C"/>
    <property type="match status" value="1"/>
</dbReference>
<dbReference type="SUPFAM" id="SSF56042">
    <property type="entry name" value="PurM C-terminal domain-like"/>
    <property type="match status" value="1"/>
</dbReference>
<dbReference type="SUPFAM" id="SSF55326">
    <property type="entry name" value="PurM N-terminal domain-like"/>
    <property type="match status" value="1"/>
</dbReference>
<accession>C1C9V1</accession>
<proteinExistence type="inferred from homology"/>
<reference key="1">
    <citation type="journal article" date="2010" name="Genome Biol.">
        <title>Structure and dynamics of the pan-genome of Streptococcus pneumoniae and closely related species.</title>
        <authorList>
            <person name="Donati C."/>
            <person name="Hiller N.L."/>
            <person name="Tettelin H."/>
            <person name="Muzzi A."/>
            <person name="Croucher N.J."/>
            <person name="Angiuoli S.V."/>
            <person name="Oggioni M."/>
            <person name="Dunning Hotopp J.C."/>
            <person name="Hu F.Z."/>
            <person name="Riley D.R."/>
            <person name="Covacci A."/>
            <person name="Mitchell T.J."/>
            <person name="Bentley S.D."/>
            <person name="Kilian M."/>
            <person name="Ehrlich G.D."/>
            <person name="Rappuoli R."/>
            <person name="Moxon E.R."/>
            <person name="Masignani V."/>
        </authorList>
    </citation>
    <scope>NUCLEOTIDE SEQUENCE [LARGE SCALE GENOMIC DNA]</scope>
    <source>
        <strain>70585</strain>
    </source>
</reference>
<comment type="catalytic activity">
    <reaction evidence="1">
        <text>2-formamido-N(1)-(5-O-phospho-beta-D-ribosyl)acetamidine + ATP = 5-amino-1-(5-phospho-beta-D-ribosyl)imidazole + ADP + phosphate + H(+)</text>
        <dbReference type="Rhea" id="RHEA:23032"/>
        <dbReference type="ChEBI" id="CHEBI:15378"/>
        <dbReference type="ChEBI" id="CHEBI:30616"/>
        <dbReference type="ChEBI" id="CHEBI:43474"/>
        <dbReference type="ChEBI" id="CHEBI:137981"/>
        <dbReference type="ChEBI" id="CHEBI:147287"/>
        <dbReference type="ChEBI" id="CHEBI:456216"/>
        <dbReference type="EC" id="6.3.3.1"/>
    </reaction>
</comment>
<comment type="pathway">
    <text evidence="1">Purine metabolism; IMP biosynthesis via de novo pathway; 5-amino-1-(5-phospho-D-ribosyl)imidazole from N(2)-formyl-N(1)-(5-phospho-D-ribosyl)glycinamide: step 2/2.</text>
</comment>
<comment type="subcellular location">
    <subcellularLocation>
        <location evidence="1">Cytoplasm</location>
    </subcellularLocation>
</comment>
<comment type="similarity">
    <text evidence="1">Belongs to the AIR synthase family.</text>
</comment>
<name>PUR5_STRP7</name>
<feature type="chain" id="PRO_1000148299" description="Phosphoribosylformylglycinamidine cyclo-ligase">
    <location>
        <begin position="1"/>
        <end position="340"/>
    </location>
</feature>